<dbReference type="EC" id="2.1.1.228" evidence="1"/>
<dbReference type="EMBL" id="CP001176">
    <property type="protein sequence ID" value="ACK59050.1"/>
    <property type="molecule type" value="Genomic_DNA"/>
</dbReference>
<dbReference type="RefSeq" id="WP_000686903.1">
    <property type="nucleotide sequence ID" value="NZ_VEHB01000002.1"/>
</dbReference>
<dbReference type="SMR" id="B7HDW4"/>
<dbReference type="KEGG" id="bcb:BCB4264_A3940"/>
<dbReference type="HOGENOM" id="CLU_047363_0_1_9"/>
<dbReference type="Proteomes" id="UP000007096">
    <property type="component" value="Chromosome"/>
</dbReference>
<dbReference type="GO" id="GO:0005829">
    <property type="term" value="C:cytosol"/>
    <property type="evidence" value="ECO:0007669"/>
    <property type="project" value="TreeGrafter"/>
</dbReference>
<dbReference type="GO" id="GO:0052906">
    <property type="term" value="F:tRNA (guanine(37)-N1)-methyltransferase activity"/>
    <property type="evidence" value="ECO:0007669"/>
    <property type="project" value="UniProtKB-UniRule"/>
</dbReference>
<dbReference type="GO" id="GO:0002939">
    <property type="term" value="P:tRNA N1-guanine methylation"/>
    <property type="evidence" value="ECO:0007669"/>
    <property type="project" value="TreeGrafter"/>
</dbReference>
<dbReference type="CDD" id="cd18080">
    <property type="entry name" value="TrmD-like"/>
    <property type="match status" value="1"/>
</dbReference>
<dbReference type="FunFam" id="1.10.1270.20:FF:000001">
    <property type="entry name" value="tRNA (guanine-N(1)-)-methyltransferase"/>
    <property type="match status" value="1"/>
</dbReference>
<dbReference type="FunFam" id="3.40.1280.10:FF:000001">
    <property type="entry name" value="tRNA (guanine-N(1)-)-methyltransferase"/>
    <property type="match status" value="1"/>
</dbReference>
<dbReference type="Gene3D" id="3.40.1280.10">
    <property type="match status" value="1"/>
</dbReference>
<dbReference type="Gene3D" id="1.10.1270.20">
    <property type="entry name" value="tRNA(m1g37)methyltransferase, domain 2"/>
    <property type="match status" value="1"/>
</dbReference>
<dbReference type="HAMAP" id="MF_00605">
    <property type="entry name" value="TrmD"/>
    <property type="match status" value="1"/>
</dbReference>
<dbReference type="InterPro" id="IPR029028">
    <property type="entry name" value="Alpha/beta_knot_MTases"/>
</dbReference>
<dbReference type="InterPro" id="IPR023148">
    <property type="entry name" value="tRNA_m1G_MeTrfase_C_sf"/>
</dbReference>
<dbReference type="InterPro" id="IPR002649">
    <property type="entry name" value="tRNA_m1G_MeTrfase_TrmD"/>
</dbReference>
<dbReference type="InterPro" id="IPR029026">
    <property type="entry name" value="tRNA_m1G_MTases_N"/>
</dbReference>
<dbReference type="InterPro" id="IPR016009">
    <property type="entry name" value="tRNA_MeTrfase_TRMD/TRM10"/>
</dbReference>
<dbReference type="NCBIfam" id="NF000648">
    <property type="entry name" value="PRK00026.1"/>
    <property type="match status" value="1"/>
</dbReference>
<dbReference type="NCBIfam" id="TIGR00088">
    <property type="entry name" value="trmD"/>
    <property type="match status" value="1"/>
</dbReference>
<dbReference type="PANTHER" id="PTHR46417">
    <property type="entry name" value="TRNA (GUANINE-N(1)-)-METHYLTRANSFERASE"/>
    <property type="match status" value="1"/>
</dbReference>
<dbReference type="PANTHER" id="PTHR46417:SF1">
    <property type="entry name" value="TRNA (GUANINE-N(1)-)-METHYLTRANSFERASE"/>
    <property type="match status" value="1"/>
</dbReference>
<dbReference type="Pfam" id="PF01746">
    <property type="entry name" value="tRNA_m1G_MT"/>
    <property type="match status" value="1"/>
</dbReference>
<dbReference type="PIRSF" id="PIRSF000386">
    <property type="entry name" value="tRNA_mtase"/>
    <property type="match status" value="1"/>
</dbReference>
<dbReference type="SUPFAM" id="SSF75217">
    <property type="entry name" value="alpha/beta knot"/>
    <property type="match status" value="1"/>
</dbReference>
<proteinExistence type="inferred from homology"/>
<sequence length="244" mass="27966">MKIDILTLFPDMFTGVFGSSILKKAQEKEAVNLRVVNFRDYTTSKHNSVDDYPYGGGAGMVLTPQPIFDAVEDLTKETERKPRVVLMCPQGERFTQKKAEELAGEEHLIFVCGHYEGYDERIREHLVTDEISIGDYVLTGGELASMVITDSVVRLLPGVLGNHASQVEDSFSTGLLEHPHYTRPADFRGMKVPDVLMSGNHKNIDEWRHKESLRRTYTRRPDLLDERELSKQEKKWLEEIKREQ</sequence>
<keyword id="KW-0963">Cytoplasm</keyword>
<keyword id="KW-0489">Methyltransferase</keyword>
<keyword id="KW-0949">S-adenosyl-L-methionine</keyword>
<keyword id="KW-0808">Transferase</keyword>
<keyword id="KW-0819">tRNA processing</keyword>
<protein>
    <recommendedName>
        <fullName evidence="1">tRNA (guanine-N(1)-)-methyltransferase</fullName>
        <ecNumber evidence="1">2.1.1.228</ecNumber>
    </recommendedName>
    <alternativeName>
        <fullName evidence="1">M1G-methyltransferase</fullName>
    </alternativeName>
    <alternativeName>
        <fullName evidence="1">tRNA [GM37] methyltransferase</fullName>
    </alternativeName>
</protein>
<evidence type="ECO:0000255" key="1">
    <source>
        <dbReference type="HAMAP-Rule" id="MF_00605"/>
    </source>
</evidence>
<feature type="chain" id="PRO_1000130133" description="tRNA (guanine-N(1)-)-methyltransferase">
    <location>
        <begin position="1"/>
        <end position="244"/>
    </location>
</feature>
<feature type="binding site" evidence="1">
    <location>
        <position position="113"/>
    </location>
    <ligand>
        <name>S-adenosyl-L-methionine</name>
        <dbReference type="ChEBI" id="CHEBI:59789"/>
    </ligand>
</feature>
<feature type="binding site" evidence="1">
    <location>
        <begin position="133"/>
        <end position="138"/>
    </location>
    <ligand>
        <name>S-adenosyl-L-methionine</name>
        <dbReference type="ChEBI" id="CHEBI:59789"/>
    </ligand>
</feature>
<reference key="1">
    <citation type="submission" date="2008-10" db="EMBL/GenBank/DDBJ databases">
        <title>Genome sequence of Bacillus cereus B4264.</title>
        <authorList>
            <person name="Dodson R.J."/>
            <person name="Durkin A.S."/>
            <person name="Rosovitz M.J."/>
            <person name="Rasko D.A."/>
            <person name="Hoffmaster A."/>
            <person name="Ravel J."/>
            <person name="Sutton G."/>
        </authorList>
    </citation>
    <scope>NUCLEOTIDE SEQUENCE [LARGE SCALE GENOMIC DNA]</scope>
    <source>
        <strain>B4264</strain>
    </source>
</reference>
<accession>B7HDW4</accession>
<organism>
    <name type="scientific">Bacillus cereus (strain B4264)</name>
    <dbReference type="NCBI Taxonomy" id="405532"/>
    <lineage>
        <taxon>Bacteria</taxon>
        <taxon>Bacillati</taxon>
        <taxon>Bacillota</taxon>
        <taxon>Bacilli</taxon>
        <taxon>Bacillales</taxon>
        <taxon>Bacillaceae</taxon>
        <taxon>Bacillus</taxon>
        <taxon>Bacillus cereus group</taxon>
    </lineage>
</organism>
<name>TRMD_BACC4</name>
<comment type="function">
    <text evidence="1">Specifically methylates guanosine-37 in various tRNAs.</text>
</comment>
<comment type="catalytic activity">
    <reaction evidence="1">
        <text>guanosine(37) in tRNA + S-adenosyl-L-methionine = N(1)-methylguanosine(37) in tRNA + S-adenosyl-L-homocysteine + H(+)</text>
        <dbReference type="Rhea" id="RHEA:36899"/>
        <dbReference type="Rhea" id="RHEA-COMP:10145"/>
        <dbReference type="Rhea" id="RHEA-COMP:10147"/>
        <dbReference type="ChEBI" id="CHEBI:15378"/>
        <dbReference type="ChEBI" id="CHEBI:57856"/>
        <dbReference type="ChEBI" id="CHEBI:59789"/>
        <dbReference type="ChEBI" id="CHEBI:73542"/>
        <dbReference type="ChEBI" id="CHEBI:74269"/>
        <dbReference type="EC" id="2.1.1.228"/>
    </reaction>
</comment>
<comment type="subunit">
    <text evidence="1">Homodimer.</text>
</comment>
<comment type="subcellular location">
    <subcellularLocation>
        <location evidence="1">Cytoplasm</location>
    </subcellularLocation>
</comment>
<comment type="similarity">
    <text evidence="1">Belongs to the RNA methyltransferase TrmD family.</text>
</comment>
<gene>
    <name evidence="1" type="primary">trmD</name>
    <name type="ordered locus">BCB4264_A3940</name>
</gene>